<reference key="1">
    <citation type="journal article" date="2006" name="BMC Genomics">
        <title>The genome of the square archaeon Haloquadratum walsbyi: life at the limits of water activity.</title>
        <authorList>
            <person name="Bolhuis H."/>
            <person name="Palm P."/>
            <person name="Wende A."/>
            <person name="Falb M."/>
            <person name="Rampp M."/>
            <person name="Rodriguez-Valera F."/>
            <person name="Pfeiffer F."/>
            <person name="Oesterhelt D."/>
        </authorList>
    </citation>
    <scope>NUCLEOTIDE SEQUENCE [LARGE SCALE GENOMIC DNA]</scope>
    <source>
        <strain>DSM 16790 / HBSQ001</strain>
    </source>
</reference>
<comment type="catalytic activity">
    <reaction evidence="1">
        <text>tRNA(His) + L-histidine + ATP = L-histidyl-tRNA(His) + AMP + diphosphate + H(+)</text>
        <dbReference type="Rhea" id="RHEA:17313"/>
        <dbReference type="Rhea" id="RHEA-COMP:9665"/>
        <dbReference type="Rhea" id="RHEA-COMP:9689"/>
        <dbReference type="ChEBI" id="CHEBI:15378"/>
        <dbReference type="ChEBI" id="CHEBI:30616"/>
        <dbReference type="ChEBI" id="CHEBI:33019"/>
        <dbReference type="ChEBI" id="CHEBI:57595"/>
        <dbReference type="ChEBI" id="CHEBI:78442"/>
        <dbReference type="ChEBI" id="CHEBI:78527"/>
        <dbReference type="ChEBI" id="CHEBI:456215"/>
        <dbReference type="EC" id="6.1.1.21"/>
    </reaction>
</comment>
<comment type="subcellular location">
    <subcellularLocation>
        <location evidence="1">Cytoplasm</location>
    </subcellularLocation>
</comment>
<comment type="similarity">
    <text evidence="1">Belongs to the class-II aminoacyl-tRNA synthetase family.</text>
</comment>
<gene>
    <name evidence="1" type="primary">hisS</name>
    <name type="ordered locus">HQ_1107A</name>
</gene>
<proteinExistence type="inferred from homology"/>
<evidence type="ECO:0000255" key="1">
    <source>
        <dbReference type="HAMAP-Rule" id="MF_00127"/>
    </source>
</evidence>
<evidence type="ECO:0000256" key="2">
    <source>
        <dbReference type="SAM" id="MobiDB-lite"/>
    </source>
</evidence>
<keyword id="KW-0030">Aminoacyl-tRNA synthetase</keyword>
<keyword id="KW-0067">ATP-binding</keyword>
<keyword id="KW-0963">Cytoplasm</keyword>
<keyword id="KW-0436">Ligase</keyword>
<keyword id="KW-0547">Nucleotide-binding</keyword>
<keyword id="KW-0648">Protein biosynthesis</keyword>
<keyword id="KW-1185">Reference proteome</keyword>
<organism>
    <name type="scientific">Haloquadratum walsbyi (strain DSM 16790 / HBSQ001)</name>
    <dbReference type="NCBI Taxonomy" id="362976"/>
    <lineage>
        <taxon>Archaea</taxon>
        <taxon>Methanobacteriati</taxon>
        <taxon>Methanobacteriota</taxon>
        <taxon>Stenosarchaea group</taxon>
        <taxon>Halobacteria</taxon>
        <taxon>Halobacteriales</taxon>
        <taxon>Haloferacaceae</taxon>
        <taxon>Haloquadratum</taxon>
    </lineage>
</organism>
<accession>Q18DQ2</accession>
<name>SYH_HALWD</name>
<dbReference type="EC" id="6.1.1.21" evidence="1"/>
<dbReference type="EMBL" id="AM180088">
    <property type="protein sequence ID" value="CAJ51237.1"/>
    <property type="molecule type" value="Genomic_DNA"/>
</dbReference>
<dbReference type="RefSeq" id="WP_011570403.1">
    <property type="nucleotide sequence ID" value="NC_008212.1"/>
</dbReference>
<dbReference type="SMR" id="Q18DQ2"/>
<dbReference type="STRING" id="362976.HQ_1107A"/>
<dbReference type="GeneID" id="4194126"/>
<dbReference type="KEGG" id="hwa:HQ_1107A"/>
<dbReference type="eggNOG" id="arCOG00404">
    <property type="taxonomic scope" value="Archaea"/>
</dbReference>
<dbReference type="HOGENOM" id="CLU_025113_3_1_2"/>
<dbReference type="Proteomes" id="UP000001975">
    <property type="component" value="Chromosome"/>
</dbReference>
<dbReference type="GO" id="GO:0005737">
    <property type="term" value="C:cytoplasm"/>
    <property type="evidence" value="ECO:0007669"/>
    <property type="project" value="UniProtKB-SubCell"/>
</dbReference>
<dbReference type="GO" id="GO:0005524">
    <property type="term" value="F:ATP binding"/>
    <property type="evidence" value="ECO:0007669"/>
    <property type="project" value="UniProtKB-UniRule"/>
</dbReference>
<dbReference type="GO" id="GO:0004821">
    <property type="term" value="F:histidine-tRNA ligase activity"/>
    <property type="evidence" value="ECO:0007669"/>
    <property type="project" value="UniProtKB-UniRule"/>
</dbReference>
<dbReference type="GO" id="GO:0006427">
    <property type="term" value="P:histidyl-tRNA aminoacylation"/>
    <property type="evidence" value="ECO:0007669"/>
    <property type="project" value="UniProtKB-UniRule"/>
</dbReference>
<dbReference type="CDD" id="cd00773">
    <property type="entry name" value="HisRS-like_core"/>
    <property type="match status" value="1"/>
</dbReference>
<dbReference type="CDD" id="cd00859">
    <property type="entry name" value="HisRS_anticodon"/>
    <property type="match status" value="1"/>
</dbReference>
<dbReference type="Gene3D" id="3.40.50.800">
    <property type="entry name" value="Anticodon-binding domain"/>
    <property type="match status" value="1"/>
</dbReference>
<dbReference type="Gene3D" id="3.30.930.10">
    <property type="entry name" value="Bira Bifunctional Protein, Domain 2"/>
    <property type="match status" value="1"/>
</dbReference>
<dbReference type="HAMAP" id="MF_00127">
    <property type="entry name" value="His_tRNA_synth"/>
    <property type="match status" value="1"/>
</dbReference>
<dbReference type="InterPro" id="IPR006195">
    <property type="entry name" value="aa-tRNA-synth_II"/>
</dbReference>
<dbReference type="InterPro" id="IPR045864">
    <property type="entry name" value="aa-tRNA-synth_II/BPL/LPL"/>
</dbReference>
<dbReference type="InterPro" id="IPR004154">
    <property type="entry name" value="Anticodon-bd"/>
</dbReference>
<dbReference type="InterPro" id="IPR036621">
    <property type="entry name" value="Anticodon-bd_dom_sf"/>
</dbReference>
<dbReference type="InterPro" id="IPR015807">
    <property type="entry name" value="His-tRNA-ligase"/>
</dbReference>
<dbReference type="InterPro" id="IPR041715">
    <property type="entry name" value="HisRS-like_core"/>
</dbReference>
<dbReference type="InterPro" id="IPR004516">
    <property type="entry name" value="HisRS/HisZ"/>
</dbReference>
<dbReference type="InterPro" id="IPR033656">
    <property type="entry name" value="HisRS_anticodon"/>
</dbReference>
<dbReference type="NCBIfam" id="TIGR00442">
    <property type="entry name" value="hisS"/>
    <property type="match status" value="1"/>
</dbReference>
<dbReference type="PANTHER" id="PTHR43707:SF1">
    <property type="entry name" value="HISTIDINE--TRNA LIGASE, MITOCHONDRIAL-RELATED"/>
    <property type="match status" value="1"/>
</dbReference>
<dbReference type="PANTHER" id="PTHR43707">
    <property type="entry name" value="HISTIDYL-TRNA SYNTHETASE"/>
    <property type="match status" value="1"/>
</dbReference>
<dbReference type="Pfam" id="PF03129">
    <property type="entry name" value="HGTP_anticodon"/>
    <property type="match status" value="1"/>
</dbReference>
<dbReference type="Pfam" id="PF13393">
    <property type="entry name" value="tRNA-synt_His"/>
    <property type="match status" value="1"/>
</dbReference>
<dbReference type="PIRSF" id="PIRSF001549">
    <property type="entry name" value="His-tRNA_synth"/>
    <property type="match status" value="1"/>
</dbReference>
<dbReference type="SUPFAM" id="SSF52954">
    <property type="entry name" value="Class II aaRS ABD-related"/>
    <property type="match status" value="1"/>
</dbReference>
<dbReference type="SUPFAM" id="SSF55681">
    <property type="entry name" value="Class II aaRS and biotin synthetases"/>
    <property type="match status" value="1"/>
</dbReference>
<dbReference type="PROSITE" id="PS50862">
    <property type="entry name" value="AA_TRNA_LIGASE_II"/>
    <property type="match status" value="1"/>
</dbReference>
<sequence length="434" mass="47812">MYDRLKGFRDFYPPEMTARRQVIDILETTATQYGFREVGTPTLEQTQMYVDKSGEGIEEELYAFSDDGGRDVTLIPELTPTVARMVVDKQQALSKPIKWVSTRPFWRYEQVQQGRFREFYQTNVDIFGTADPIADAEILAFAADALRNLGLTASDFEFRVSHRDILSGLLASITNDDADIDTRAAIRAVDKRAKIEQAEYHGLLTDAGLSYDQAQSFDDLLTTADLDEIATVGNDIVTTAVQNLRSVLAAVDDLGVGEFCDISLTTARGLDYYTGVVFECFDATGEVSRSVFGGGRYDNLIESFGGQPTPAVGVAPGLAPLSLLCQRAGVWPTEELTTDYYILTVGDTRSVATRIARELRVNKNTVEIDIADRSFGAQMGYADSINAETVIIVGERDLENDEITIKDMNSGDQTTVPVEAFPGDHDAPTYEDVV</sequence>
<protein>
    <recommendedName>
        <fullName evidence="1">Histidine--tRNA ligase</fullName>
        <ecNumber evidence="1">6.1.1.21</ecNumber>
    </recommendedName>
    <alternativeName>
        <fullName evidence="1">Histidyl-tRNA synthetase</fullName>
        <shortName evidence="1">HisRS</shortName>
    </alternativeName>
</protein>
<feature type="chain" id="PRO_1000016371" description="Histidine--tRNA ligase">
    <location>
        <begin position="1"/>
        <end position="434"/>
    </location>
</feature>
<feature type="region of interest" description="Disordered" evidence="2">
    <location>
        <begin position="412"/>
        <end position="434"/>
    </location>
</feature>